<reference key="1">
    <citation type="submission" date="2002-01" db="EMBL/GenBank/DDBJ databases">
        <authorList>
            <person name="Kim N.-S."/>
            <person name="Shon H.-Y."/>
            <person name="Oh J.-H."/>
            <person name="Lee J.-Y."/>
            <person name="Kim J.-M."/>
            <person name="Hahn Y."/>
            <person name="Kim Y."/>
        </authorList>
    </citation>
    <scope>NUCLEOTIDE SEQUENCE [MRNA]</scope>
</reference>
<reference key="2">
    <citation type="journal article" date="2004" name="Genome Res.">
        <title>The status, quality, and expansion of the NIH full-length cDNA project: the Mammalian Gene Collection (MGC).</title>
        <authorList>
            <consortium name="The MGC Project Team"/>
        </authorList>
    </citation>
    <scope>NUCLEOTIDE SEQUENCE [LARGE SCALE MRNA]</scope>
    <source>
        <tissue>Uterus</tissue>
    </source>
</reference>
<reference key="3">
    <citation type="journal article" date="2013" name="J. Biol. Chem.">
        <title>C1q/tumor necrosis factor-related protein 11 (CTRP11), a novel adipose stroma-derived regulator of adipogenesis.</title>
        <authorList>
            <person name="Wei Z."/>
            <person name="Seldin M.M."/>
            <person name="Natarajan N."/>
            <person name="Djemal D.C."/>
            <person name="Peterson J.M."/>
            <person name="Wong G.W."/>
        </authorList>
    </citation>
    <scope>TISSUE SPECIFICITY</scope>
</reference>
<evidence type="ECO:0000250" key="1"/>
<evidence type="ECO:0000250" key="2">
    <source>
        <dbReference type="UniProtKB" id="Q4ZJM9"/>
    </source>
</evidence>
<evidence type="ECO:0000255" key="3"/>
<evidence type="ECO:0000255" key="4">
    <source>
        <dbReference type="PROSITE-ProRule" id="PRU00368"/>
    </source>
</evidence>
<evidence type="ECO:0000256" key="5">
    <source>
        <dbReference type="SAM" id="MobiDB-lite"/>
    </source>
</evidence>
<evidence type="ECO:0000269" key="6">
    <source>
    </source>
</evidence>
<protein>
    <recommendedName>
        <fullName>Complement C1q-like protein 4</fullName>
    </recommendedName>
    <alternativeName>
        <fullName>C1q and tumor necrosis factor-related protein 11</fullName>
        <shortName>C1q/TNF-related protein 11</shortName>
    </alternativeName>
</protein>
<accession>Q86Z23</accession>
<comment type="function">
    <text evidence="1">May regulate the number of excitatory synapses that are formed on hippocampus neurons. Has no effect on inhibitory synapses (By similarity). May inhibit adipocyte differentiation at an early stage of the process (By similarity).</text>
</comment>
<comment type="subunit">
    <text evidence="2">Forms homooligomers, predominantly dimers or trimers. Forms heterooligomers with C1QL1, C1QL2 and C1QL3, when proteins are coexpressed; this interaction does not occur after secretion. Interacts with ADGRB3.</text>
</comment>
<comment type="interaction">
    <interactant intactId="EBI-12062109">
        <id>Q86Z23</id>
    </interactant>
    <interactant intactId="EBI-6657396">
        <id>P19397</id>
        <label>CD53</label>
    </interactant>
    <organismsDiffer>false</organismsDiffer>
    <experiments>3</experiments>
</comment>
<comment type="interaction">
    <interactant intactId="EBI-12062109">
        <id>Q86Z23</id>
    </interactant>
    <interactant intactId="EBI-2622997">
        <id>Q9HA82</id>
        <label>CERS4</label>
    </interactant>
    <organismsDiffer>false</organismsDiffer>
    <experiments>3</experiments>
</comment>
<comment type="interaction">
    <interactant intactId="EBI-12062109">
        <id>Q86Z23</id>
    </interactant>
    <interactant intactId="EBI-743099">
        <id>Q969F0</id>
        <label>FATE1</label>
    </interactant>
    <organismsDiffer>false</organismsDiffer>
    <experiments>3</experiments>
</comment>
<comment type="interaction">
    <interactant intactId="EBI-12062109">
        <id>Q86Z23</id>
    </interactant>
    <interactant intactId="EBI-12142257">
        <id>Q8TBE3</id>
        <label>FNDC9</label>
    </interactant>
    <organismsDiffer>false</organismsDiffer>
    <experiments>3</experiments>
</comment>
<comment type="interaction">
    <interactant intactId="EBI-12062109">
        <id>Q86Z23</id>
    </interactant>
    <interactant intactId="EBI-712073">
        <id>Q8NBJ4</id>
        <label>GOLM1</label>
    </interactant>
    <organismsDiffer>false</organismsDiffer>
    <experiments>3</experiments>
</comment>
<comment type="interaction">
    <interactant intactId="EBI-12062109">
        <id>Q86Z23</id>
    </interactant>
    <interactant intactId="EBI-13345167">
        <id>Q8TDT2</id>
        <label>GPR152</label>
    </interactant>
    <organismsDiffer>false</organismsDiffer>
    <experiments>3</experiments>
</comment>
<comment type="interaction">
    <interactant intactId="EBI-12062109">
        <id>Q86Z23</id>
    </interactant>
    <interactant intactId="EBI-1031656">
        <id>Q13651</id>
        <label>IL10RA</label>
    </interactant>
    <organismsDiffer>false</organismsDiffer>
    <experiments>3</experiments>
</comment>
<comment type="interaction">
    <interactant intactId="EBI-12062109">
        <id>Q86Z23</id>
    </interactant>
    <interactant intactId="EBI-17490413">
        <id>A8MZ59</id>
        <label>LEUTX</label>
    </interactant>
    <organismsDiffer>false</organismsDiffer>
    <experiments>3</experiments>
</comment>
<comment type="interaction">
    <interactant intactId="EBI-12062109">
        <id>Q86Z23</id>
    </interactant>
    <interactant intactId="EBI-11956541">
        <id>Q9GZY8-5</id>
        <label>MFF</label>
    </interactant>
    <organismsDiffer>false</organismsDiffer>
    <experiments>3</experiments>
</comment>
<comment type="interaction">
    <interactant intactId="EBI-12062109">
        <id>Q86Z23</id>
    </interactant>
    <interactant intactId="EBI-15853497">
        <id>Q9UBD6</id>
        <label>RHCG</label>
    </interactant>
    <organismsDiffer>false</organismsDiffer>
    <experiments>3</experiments>
</comment>
<comment type="interaction">
    <interactant intactId="EBI-12062109">
        <id>Q86Z23</id>
    </interactant>
    <interactant intactId="EBI-12823227">
        <id>Q6ZMJ2-2</id>
        <label>SCARA5</label>
    </interactant>
    <organismsDiffer>false</organismsDiffer>
    <experiments>3</experiments>
</comment>
<comment type="interaction">
    <interactant intactId="EBI-12062109">
        <id>Q86Z23</id>
    </interactant>
    <interactant intactId="EBI-347996">
        <id>O43765</id>
        <label>SGTA</label>
    </interactant>
    <organismsDiffer>false</organismsDiffer>
    <experiments>3</experiments>
</comment>
<comment type="interaction">
    <interactant intactId="EBI-12062109">
        <id>Q86Z23</id>
    </interactant>
    <interactant intactId="EBI-744081">
        <id>Q96EQ0</id>
        <label>SGTB</label>
    </interactant>
    <organismsDiffer>false</organismsDiffer>
    <experiments>3</experiments>
</comment>
<comment type="interaction">
    <interactant intactId="EBI-12062109">
        <id>Q86Z23</id>
    </interactant>
    <interactant intactId="EBI-9978441">
        <id>Q9H2H9</id>
        <label>SLC38A1</label>
    </interactant>
    <organismsDiffer>false</organismsDiffer>
    <experiments>3</experiments>
</comment>
<comment type="interaction">
    <interactant intactId="EBI-12062109">
        <id>Q86Z23</id>
    </interactant>
    <interactant intactId="EBI-17280858">
        <id>Q8WWF3</id>
        <label>SSMEM1</label>
    </interactant>
    <organismsDiffer>false</organismsDiffer>
    <experiments>3</experiments>
</comment>
<comment type="interaction">
    <interactant intactId="EBI-12062109">
        <id>Q86Z23</id>
    </interactant>
    <interactant intactId="EBI-11724423">
        <id>Q7Z7N9</id>
        <label>TMEM179B</label>
    </interactant>
    <organismsDiffer>false</organismsDiffer>
    <experiments>3</experiments>
</comment>
<comment type="interaction">
    <interactant intactId="EBI-12062109">
        <id>Q86Z23</id>
    </interactant>
    <interactant intactId="EBI-12345267">
        <id>O15393-2</id>
        <label>TMPRSS2</label>
    </interactant>
    <organismsDiffer>false</organismsDiffer>
    <experiments>3</experiments>
</comment>
<comment type="interaction">
    <interactant intactId="EBI-12062109">
        <id>Q86Z23</id>
    </interactant>
    <interactant intactId="EBI-18055230">
        <id>P34981</id>
        <label>TRHR</label>
    </interactant>
    <organismsDiffer>false</organismsDiffer>
    <experiments>3</experiments>
</comment>
<comment type="interaction">
    <interactant intactId="EBI-12062109">
        <id>Q86Z23</id>
    </interactant>
    <interactant intactId="EBI-947187">
        <id>Q9UHD9</id>
        <label>UBQLN2</label>
    </interactant>
    <organismsDiffer>false</organismsDiffer>
    <experiments>3</experiments>
</comment>
<comment type="subcellular location">
    <subcellularLocation>
        <location evidence="1">Secreted</location>
    </subcellularLocation>
</comment>
<comment type="tissue specificity">
    <text evidence="6">Highest expression levels in testis and adipose tissue, lower levels in skeletal muscle and kidney.</text>
</comment>
<name>C1QL4_HUMAN</name>
<sequence length="238" mass="24909">MVLLLLVAIPLLVHSSRGPAHYEMLGRCRMVCDPHGPRGPGPDGAPASVPPFPPGAKGEVGRRGKAGLRGPPGPPGPRGPPGEPGRPGPPGPPGPGPGGVAPAAGYVPRIAFYAGLRRPHEGYEVLRFDDVVTNVGNAYEAASGKFTCPMPGVYFFAYHVLMRGGDGTSMWADLMKNGQVRASAIAQDADQNYDYASNSVILHLDVGDEVFIKLDGGKVHGGNTNKYSTFSGFIIYPD</sequence>
<proteinExistence type="evidence at protein level"/>
<keyword id="KW-0176">Collagen</keyword>
<keyword id="KW-1267">Proteomics identification</keyword>
<keyword id="KW-1185">Reference proteome</keyword>
<keyword id="KW-0964">Secreted</keyword>
<keyword id="KW-0732">Signal</keyword>
<gene>
    <name type="primary">C1QL4</name>
    <name type="synonym">CTRP11</name>
</gene>
<feature type="signal peptide" evidence="3">
    <location>
        <begin position="1"/>
        <end position="15"/>
    </location>
</feature>
<feature type="chain" id="PRO_0000274338" description="Complement C1q-like protein 4">
    <location>
        <begin position="16"/>
        <end position="238"/>
    </location>
</feature>
<feature type="domain" description="Collagen-like">
    <location>
        <begin position="53"/>
        <end position="96"/>
    </location>
</feature>
<feature type="domain" description="C1q" evidence="4">
    <location>
        <begin position="105"/>
        <end position="238"/>
    </location>
</feature>
<feature type="region of interest" description="Disordered" evidence="5">
    <location>
        <begin position="36"/>
        <end position="101"/>
    </location>
</feature>
<feature type="compositionally biased region" description="Pro residues" evidence="5">
    <location>
        <begin position="71"/>
        <end position="96"/>
    </location>
</feature>
<organism>
    <name type="scientific">Homo sapiens</name>
    <name type="common">Human</name>
    <dbReference type="NCBI Taxonomy" id="9606"/>
    <lineage>
        <taxon>Eukaryota</taxon>
        <taxon>Metazoa</taxon>
        <taxon>Chordata</taxon>
        <taxon>Craniata</taxon>
        <taxon>Vertebrata</taxon>
        <taxon>Euteleostomi</taxon>
        <taxon>Mammalia</taxon>
        <taxon>Eutheria</taxon>
        <taxon>Euarchontoglires</taxon>
        <taxon>Primates</taxon>
        <taxon>Haplorrhini</taxon>
        <taxon>Catarrhini</taxon>
        <taxon>Hominidae</taxon>
        <taxon>Homo</taxon>
    </lineage>
</organism>
<dbReference type="EMBL" id="AF466366">
    <property type="protein sequence ID" value="AAO33387.1"/>
    <property type="molecule type" value="mRNA"/>
</dbReference>
<dbReference type="EMBL" id="BC110812">
    <property type="protein sequence ID" value="AAI10813.1"/>
    <property type="molecule type" value="mRNA"/>
</dbReference>
<dbReference type="CCDS" id="CCDS31793.1"/>
<dbReference type="RefSeq" id="NP_001008224.1">
    <property type="nucleotide sequence ID" value="NM_001008223.2"/>
</dbReference>
<dbReference type="SMR" id="Q86Z23"/>
<dbReference type="BioGRID" id="130794">
    <property type="interactions" value="91"/>
</dbReference>
<dbReference type="FunCoup" id="Q86Z23">
    <property type="interactions" value="332"/>
</dbReference>
<dbReference type="IntAct" id="Q86Z23">
    <property type="interactions" value="71"/>
</dbReference>
<dbReference type="STRING" id="9606.ENSP00000335285"/>
<dbReference type="iPTMnet" id="Q86Z23"/>
<dbReference type="PhosphoSitePlus" id="Q86Z23"/>
<dbReference type="BioMuta" id="C1QL4"/>
<dbReference type="DMDM" id="74759547"/>
<dbReference type="MassIVE" id="Q86Z23"/>
<dbReference type="PaxDb" id="9606-ENSP00000335285"/>
<dbReference type="PeptideAtlas" id="Q86Z23"/>
<dbReference type="ProteomicsDB" id="70499"/>
<dbReference type="Antibodypedia" id="66308">
    <property type="antibodies" value="62 antibodies from 14 providers"/>
</dbReference>
<dbReference type="DNASU" id="338761"/>
<dbReference type="Ensembl" id="ENST00000334221.5">
    <property type="protein sequence ID" value="ENSP00000335285.3"/>
    <property type="gene ID" value="ENSG00000186897.5"/>
</dbReference>
<dbReference type="GeneID" id="338761"/>
<dbReference type="KEGG" id="hsa:338761"/>
<dbReference type="MANE-Select" id="ENST00000334221.5">
    <property type="protein sequence ID" value="ENSP00000335285.3"/>
    <property type="RefSeq nucleotide sequence ID" value="NM_001008223.2"/>
    <property type="RefSeq protein sequence ID" value="NP_001008224.1"/>
</dbReference>
<dbReference type="UCSC" id="uc001rtz.2">
    <property type="organism name" value="human"/>
</dbReference>
<dbReference type="AGR" id="HGNC:31416"/>
<dbReference type="CTD" id="338761"/>
<dbReference type="DisGeNET" id="338761"/>
<dbReference type="GeneCards" id="C1QL4"/>
<dbReference type="HGNC" id="HGNC:31416">
    <property type="gene designation" value="C1QL4"/>
</dbReference>
<dbReference type="HPA" id="ENSG00000186897">
    <property type="expression patterns" value="Tissue enhanced (testis)"/>
</dbReference>
<dbReference type="MIM" id="615229">
    <property type="type" value="gene"/>
</dbReference>
<dbReference type="neXtProt" id="NX_Q86Z23"/>
<dbReference type="OpenTargets" id="ENSG00000186897"/>
<dbReference type="PharmGKB" id="PA142672536"/>
<dbReference type="VEuPathDB" id="HostDB:ENSG00000186897"/>
<dbReference type="eggNOG" id="ENOG502QSVI">
    <property type="taxonomic scope" value="Eukaryota"/>
</dbReference>
<dbReference type="GeneTree" id="ENSGT00940000155969"/>
<dbReference type="HOGENOM" id="CLU_001074_3_1_1"/>
<dbReference type="InParanoid" id="Q86Z23"/>
<dbReference type="OMA" id="GPTHYEM"/>
<dbReference type="OrthoDB" id="10070467at2759"/>
<dbReference type="PAN-GO" id="Q86Z23">
    <property type="GO annotations" value="1 GO annotation based on evolutionary models"/>
</dbReference>
<dbReference type="PhylomeDB" id="Q86Z23"/>
<dbReference type="TreeFam" id="TF329591"/>
<dbReference type="PathwayCommons" id="Q86Z23"/>
<dbReference type="SignaLink" id="Q86Z23"/>
<dbReference type="BioGRID-ORCS" id="338761">
    <property type="hits" value="6 hits in 1138 CRISPR screens"/>
</dbReference>
<dbReference type="GenomeRNAi" id="338761"/>
<dbReference type="Pharos" id="Q86Z23">
    <property type="development level" value="Tdark"/>
</dbReference>
<dbReference type="PRO" id="PR:Q86Z23"/>
<dbReference type="Proteomes" id="UP000005640">
    <property type="component" value="Chromosome 12"/>
</dbReference>
<dbReference type="RNAct" id="Q86Z23">
    <property type="molecule type" value="protein"/>
</dbReference>
<dbReference type="Bgee" id="ENSG00000186897">
    <property type="expression patterns" value="Expressed in male germ line stem cell (sensu Vertebrata) in testis and 38 other cell types or tissues"/>
</dbReference>
<dbReference type="ExpressionAtlas" id="Q86Z23">
    <property type="expression patterns" value="baseline and differential"/>
</dbReference>
<dbReference type="GO" id="GO:0005581">
    <property type="term" value="C:collagen trimer"/>
    <property type="evidence" value="ECO:0007669"/>
    <property type="project" value="UniProtKB-KW"/>
</dbReference>
<dbReference type="GO" id="GO:0005615">
    <property type="term" value="C:extracellular space"/>
    <property type="evidence" value="ECO:0007669"/>
    <property type="project" value="Ensembl"/>
</dbReference>
<dbReference type="GO" id="GO:0042802">
    <property type="term" value="F:identical protein binding"/>
    <property type="evidence" value="ECO:0007669"/>
    <property type="project" value="Ensembl"/>
</dbReference>
<dbReference type="GO" id="GO:0070371">
    <property type="term" value="P:ERK1 and ERK2 cascade"/>
    <property type="evidence" value="ECO:0007669"/>
    <property type="project" value="Ensembl"/>
</dbReference>
<dbReference type="GO" id="GO:0048144">
    <property type="term" value="P:fibroblast proliferation"/>
    <property type="evidence" value="ECO:0007669"/>
    <property type="project" value="Ensembl"/>
</dbReference>
<dbReference type="GO" id="GO:0070373">
    <property type="term" value="P:negative regulation of ERK1 and ERK2 cascade"/>
    <property type="evidence" value="ECO:0007669"/>
    <property type="project" value="Ensembl"/>
</dbReference>
<dbReference type="GO" id="GO:0045599">
    <property type="term" value="P:negative regulation of fat cell differentiation"/>
    <property type="evidence" value="ECO:0007669"/>
    <property type="project" value="Ensembl"/>
</dbReference>
<dbReference type="GO" id="GO:0048147">
    <property type="term" value="P:negative regulation of fibroblast proliferation"/>
    <property type="evidence" value="ECO:0007669"/>
    <property type="project" value="Ensembl"/>
</dbReference>
<dbReference type="FunFam" id="2.60.120.40:FF:000001">
    <property type="entry name" value="Complement C1q B chain"/>
    <property type="match status" value="1"/>
</dbReference>
<dbReference type="Gene3D" id="2.60.120.40">
    <property type="match status" value="1"/>
</dbReference>
<dbReference type="InterPro" id="IPR001073">
    <property type="entry name" value="C1q_dom"/>
</dbReference>
<dbReference type="InterPro" id="IPR050822">
    <property type="entry name" value="Cerebellin_Synaptic_Org"/>
</dbReference>
<dbReference type="InterPro" id="IPR008983">
    <property type="entry name" value="Tumour_necrosis_fac-like_dom"/>
</dbReference>
<dbReference type="PANTHER" id="PTHR22923">
    <property type="entry name" value="CEREBELLIN-RELATED"/>
    <property type="match status" value="1"/>
</dbReference>
<dbReference type="PANTHER" id="PTHR22923:SF67">
    <property type="entry name" value="COMPLEMENT C1Q-LIKE PROTEIN 4"/>
    <property type="match status" value="1"/>
</dbReference>
<dbReference type="Pfam" id="PF00386">
    <property type="entry name" value="C1q"/>
    <property type="match status" value="1"/>
</dbReference>
<dbReference type="PRINTS" id="PR00007">
    <property type="entry name" value="COMPLEMNTC1Q"/>
</dbReference>
<dbReference type="SMART" id="SM00110">
    <property type="entry name" value="C1Q"/>
    <property type="match status" value="1"/>
</dbReference>
<dbReference type="SUPFAM" id="SSF49842">
    <property type="entry name" value="TNF-like"/>
    <property type="match status" value="1"/>
</dbReference>
<dbReference type="PROSITE" id="PS50871">
    <property type="entry name" value="C1Q"/>
    <property type="match status" value="1"/>
</dbReference>